<reference key="1">
    <citation type="journal article" date="2004" name="Exp. Cell Res.">
        <title>3D3/lyric: a novel transmembrane protein of the endoplasmic reticulum and nuclear envelope, which is also present in the nucleolus.</title>
        <authorList>
            <person name="Sutherland H.G.E."/>
            <person name="Lam Y.W."/>
            <person name="Briers S."/>
            <person name="Lamond A.I."/>
            <person name="Bickmore W.A."/>
        </authorList>
    </citation>
    <scope>NUCLEOTIDE SEQUENCE [MRNA]</scope>
    <scope>SUBCELLULAR LOCATION</scope>
</reference>
<reference key="2">
    <citation type="journal article" date="2004" name="Exp. Cell Res.">
        <title>Identification of a novel protein, LYRIC, localized to tight junctions of polarized epithelial cells.</title>
        <authorList>
            <person name="Britt D.E."/>
            <person name="Yang D.-F."/>
            <person name="Yang D.-Q."/>
            <person name="Flanagan D.L."/>
            <person name="Callanan H."/>
            <person name="Lim Y.-P."/>
            <person name="Lin S.-H."/>
            <person name="Hixson D.C."/>
        </authorList>
    </citation>
    <scope>NUCLEOTIDE SEQUENCE [MRNA]</scope>
    <scope>SUBCELLULAR LOCATION</scope>
    <source>
        <tissue>Colon carcinoma</tissue>
    </source>
</reference>
<reference key="3">
    <citation type="journal article" date="2005" name="Gene">
        <title>Cloning and characterization of HIV-1-inducible astrocyte elevated gene-1, AEG-1.</title>
        <authorList>
            <person name="Kang D.-C."/>
            <person name="Su Z.-Z."/>
            <person name="Sarkar D."/>
            <person name="Emdad L."/>
            <person name="Volsky D.J."/>
            <person name="Fisher P.B."/>
        </authorList>
    </citation>
    <scope>NUCLEOTIDE SEQUENCE [MRNA]</scope>
    <scope>FUNCTION</scope>
    <scope>SUBCELLULAR LOCATION</scope>
    <scope>TISSUE SPECIFICITY</scope>
    <scope>INDUCTION</scope>
    <source>
        <tissue>Fetal astrocyte</tissue>
    </source>
</reference>
<reference key="4">
    <citation type="submission" date="2005-03" db="EMBL/GenBank/DDBJ databases">
        <title>LYRIC protein induces cell migration dependent on its cytoplasmic localization.</title>
        <authorList>
            <person name="Liang Y."/>
            <person name="Liu G."/>
        </authorList>
    </citation>
    <scope>NUCLEOTIDE SEQUENCE [MRNA]</scope>
</reference>
<reference key="5">
    <citation type="journal article" date="2004" name="Genome Res.">
        <title>The status, quality, and expansion of the NIH full-length cDNA project: the Mammalian Gene Collection (MGC).</title>
        <authorList>
            <consortium name="The MGC Project Team"/>
        </authorList>
    </citation>
    <scope>NUCLEOTIDE SEQUENCE [LARGE SCALE MRNA]</scope>
    <scope>VARIANT ALA-317</scope>
    <source>
        <tissue>Brain</tissue>
        <tissue>Skin</tissue>
        <tissue>Testis</tissue>
    </source>
</reference>
<reference key="6">
    <citation type="journal article" date="2004" name="Nat. Genet.">
        <title>Complete sequencing and characterization of 21,243 full-length human cDNAs.</title>
        <authorList>
            <person name="Ota T."/>
            <person name="Suzuki Y."/>
            <person name="Nishikawa T."/>
            <person name="Otsuki T."/>
            <person name="Sugiyama T."/>
            <person name="Irie R."/>
            <person name="Wakamatsu A."/>
            <person name="Hayashi K."/>
            <person name="Sato H."/>
            <person name="Nagai K."/>
            <person name="Kimura K."/>
            <person name="Makita H."/>
            <person name="Sekine M."/>
            <person name="Obayashi M."/>
            <person name="Nishi T."/>
            <person name="Shibahara T."/>
            <person name="Tanaka T."/>
            <person name="Ishii S."/>
            <person name="Yamamoto J."/>
            <person name="Saito K."/>
            <person name="Kawai Y."/>
            <person name="Isono Y."/>
            <person name="Nakamura Y."/>
            <person name="Nagahari K."/>
            <person name="Murakami K."/>
            <person name="Yasuda T."/>
            <person name="Iwayanagi T."/>
            <person name="Wagatsuma M."/>
            <person name="Shiratori A."/>
            <person name="Sudo H."/>
            <person name="Hosoiri T."/>
            <person name="Kaku Y."/>
            <person name="Kodaira H."/>
            <person name="Kondo H."/>
            <person name="Sugawara M."/>
            <person name="Takahashi M."/>
            <person name="Kanda K."/>
            <person name="Yokoi T."/>
            <person name="Furuya T."/>
            <person name="Kikkawa E."/>
            <person name="Omura Y."/>
            <person name="Abe K."/>
            <person name="Kamihara K."/>
            <person name="Katsuta N."/>
            <person name="Sato K."/>
            <person name="Tanikawa M."/>
            <person name="Yamazaki M."/>
            <person name="Ninomiya K."/>
            <person name="Ishibashi T."/>
            <person name="Yamashita H."/>
            <person name="Murakawa K."/>
            <person name="Fujimori K."/>
            <person name="Tanai H."/>
            <person name="Kimata M."/>
            <person name="Watanabe M."/>
            <person name="Hiraoka S."/>
            <person name="Chiba Y."/>
            <person name="Ishida S."/>
            <person name="Ono Y."/>
            <person name="Takiguchi S."/>
            <person name="Watanabe S."/>
            <person name="Yosida M."/>
            <person name="Hotuta T."/>
            <person name="Kusano J."/>
            <person name="Kanehori K."/>
            <person name="Takahashi-Fujii A."/>
            <person name="Hara H."/>
            <person name="Tanase T.-O."/>
            <person name="Nomura Y."/>
            <person name="Togiya S."/>
            <person name="Komai F."/>
            <person name="Hara R."/>
            <person name="Takeuchi K."/>
            <person name="Arita M."/>
            <person name="Imose N."/>
            <person name="Musashino K."/>
            <person name="Yuuki H."/>
            <person name="Oshima A."/>
            <person name="Sasaki N."/>
            <person name="Aotsuka S."/>
            <person name="Yoshikawa Y."/>
            <person name="Matsunawa H."/>
            <person name="Ichihara T."/>
            <person name="Shiohata N."/>
            <person name="Sano S."/>
            <person name="Moriya S."/>
            <person name="Momiyama H."/>
            <person name="Satoh N."/>
            <person name="Takami S."/>
            <person name="Terashima Y."/>
            <person name="Suzuki O."/>
            <person name="Nakagawa S."/>
            <person name="Senoh A."/>
            <person name="Mizoguchi H."/>
            <person name="Goto Y."/>
            <person name="Shimizu F."/>
            <person name="Wakebe H."/>
            <person name="Hishigaki H."/>
            <person name="Watanabe T."/>
            <person name="Sugiyama A."/>
            <person name="Takemoto M."/>
            <person name="Kawakami B."/>
            <person name="Yamazaki M."/>
            <person name="Watanabe K."/>
            <person name="Kumagai A."/>
            <person name="Itakura S."/>
            <person name="Fukuzumi Y."/>
            <person name="Fujimori Y."/>
            <person name="Komiyama M."/>
            <person name="Tashiro H."/>
            <person name="Tanigami A."/>
            <person name="Fujiwara T."/>
            <person name="Ono T."/>
            <person name="Yamada K."/>
            <person name="Fujii Y."/>
            <person name="Ozaki K."/>
            <person name="Hirao M."/>
            <person name="Ohmori Y."/>
            <person name="Kawabata A."/>
            <person name="Hikiji T."/>
            <person name="Kobatake N."/>
            <person name="Inagaki H."/>
            <person name="Ikema Y."/>
            <person name="Okamoto S."/>
            <person name="Okitani R."/>
            <person name="Kawakami T."/>
            <person name="Noguchi S."/>
            <person name="Itoh T."/>
            <person name="Shigeta K."/>
            <person name="Senba T."/>
            <person name="Matsumura K."/>
            <person name="Nakajima Y."/>
            <person name="Mizuno T."/>
            <person name="Morinaga M."/>
            <person name="Sasaki M."/>
            <person name="Togashi T."/>
            <person name="Oyama M."/>
            <person name="Hata H."/>
            <person name="Watanabe M."/>
            <person name="Komatsu T."/>
            <person name="Mizushima-Sugano J."/>
            <person name="Satoh T."/>
            <person name="Shirai Y."/>
            <person name="Takahashi Y."/>
            <person name="Nakagawa K."/>
            <person name="Okumura K."/>
            <person name="Nagase T."/>
            <person name="Nomura N."/>
            <person name="Kikuchi H."/>
            <person name="Masuho Y."/>
            <person name="Yamashita R."/>
            <person name="Nakai K."/>
            <person name="Yada T."/>
            <person name="Nakamura Y."/>
            <person name="Ohara O."/>
            <person name="Isogai T."/>
            <person name="Sugano S."/>
        </authorList>
    </citation>
    <scope>NUCLEOTIDE SEQUENCE [LARGE SCALE MRNA] OF 97-582</scope>
    <source>
        <tissue>Hepatoma</tissue>
    </source>
</reference>
<reference key="7">
    <citation type="journal article" date="2002" name="Nature">
        <title>Gene expression profiling predicts clinical outcome of breast cancer.</title>
        <authorList>
            <person name="van 't Veer L.J."/>
            <person name="Dai H."/>
            <person name="van de Vijver M.J."/>
            <person name="He Y.D."/>
            <person name="Hart A.A.A."/>
            <person name="Mao M."/>
            <person name="Peterse H.L."/>
            <person name="van der Kooy K."/>
            <person name="Marton M.J."/>
            <person name="Witteveen A.T."/>
            <person name="Schreiber G.J."/>
            <person name="Kerkhoven R.M."/>
            <person name="Roberts C."/>
            <person name="Linsley P.S."/>
            <person name="Bernards R."/>
            <person name="Friend S.H."/>
        </authorList>
    </citation>
    <scope>OVEREXPRESSION IN MAMMARY TUMORS</scope>
</reference>
<reference key="8">
    <citation type="journal article" date="2004" name="Cancer Cell">
        <title>Metadherin, a cell surface protein in breast tumors that mediates lung metastasis.</title>
        <authorList>
            <person name="Brown D.M."/>
            <person name="Ruoslahti E."/>
        </authorList>
    </citation>
    <scope>OVEREXPRESSION IN TUMORS</scope>
</reference>
<reference key="9">
    <citation type="journal article" date="2006" name="Cancer Res.">
        <title>Activation of the nuclear factor kappaB pathway by astrocyte elevated gene-1: implications for tumor progression and metastasis.</title>
        <authorList>
            <person name="Emdad L."/>
            <person name="Sarkar D."/>
            <person name="Su Z.-Z."/>
            <person name="Randolph A."/>
            <person name="Boukerche H."/>
            <person name="Valerie K."/>
            <person name="Fisher P.B."/>
        </authorList>
    </citation>
    <scope>FUNCTION</scope>
    <scope>INTERACTION WITH RELA</scope>
    <scope>INDUCTION</scope>
</reference>
<reference key="10">
    <citation type="journal article" date="2006" name="Cell">
        <title>Global, in vivo, and site-specific phosphorylation dynamics in signaling networks.</title>
        <authorList>
            <person name="Olsen J.V."/>
            <person name="Blagoev B."/>
            <person name="Gnad F."/>
            <person name="Macek B."/>
            <person name="Kumar C."/>
            <person name="Mortensen P."/>
            <person name="Mann M."/>
        </authorList>
    </citation>
    <scope>PHOSPHORYLATION [LARGE SCALE ANALYSIS] AT SER-298; SER-415 AND SER-426</scope>
    <scope>IDENTIFICATION BY MASS SPECTROMETRY [LARGE SCALE ANALYSIS]</scope>
    <source>
        <tissue>Cervix carcinoma</tissue>
    </source>
</reference>
<reference key="11">
    <citation type="journal article" date="2008" name="Biochem. Biophys. Res. Commun.">
        <title>LYRIC/AEG-1 overexpression modulates BCCIPalpha protein levels in prostate tumor cells.</title>
        <authorList>
            <person name="Ash S.C."/>
            <person name="Yang D.Q."/>
            <person name="Britt D.E."/>
        </authorList>
    </citation>
    <scope>INTERACTION WITH BCCIP</scope>
</reference>
<reference key="12">
    <citation type="journal article" date="2008" name="Cancer Res.">
        <title>Molecular basis of nuclear factor-kappaB activation by astrocyte elevated gene-1.</title>
        <authorList>
            <person name="Sarkar D."/>
            <person name="Park E.S."/>
            <person name="Emdad L."/>
            <person name="Lee S.-G."/>
            <person name="Su Z.-Z."/>
            <person name="Fisher P.B."/>
        </authorList>
    </citation>
    <scope>FUNCTION</scope>
    <scope>INTERACTION WITH CREBBP</scope>
</reference>
<reference key="13">
    <citation type="journal article" date="2008" name="J. Proteome Res.">
        <title>Phosphoproteome of resting human platelets.</title>
        <authorList>
            <person name="Zahedi R.P."/>
            <person name="Lewandrowski U."/>
            <person name="Wiesner J."/>
            <person name="Wortelkamp S."/>
            <person name="Moebius J."/>
            <person name="Schuetz C."/>
            <person name="Walter U."/>
            <person name="Gambaryan S."/>
            <person name="Sickmann A."/>
        </authorList>
    </citation>
    <scope>PHOSPHORYLATION [LARGE SCALE ANALYSIS] AT SER-298 AND SER-426</scope>
    <scope>IDENTIFICATION BY MASS SPECTROMETRY [LARGE SCALE ANALYSIS]</scope>
    <source>
        <tissue>Platelet</tissue>
    </source>
</reference>
<reference key="14">
    <citation type="journal article" date="2008" name="Proc. Natl. Acad. Sci. U.S.A.">
        <title>A quantitative atlas of mitotic phosphorylation.</title>
        <authorList>
            <person name="Dephoure N."/>
            <person name="Zhou C."/>
            <person name="Villen J."/>
            <person name="Beausoleil S.A."/>
            <person name="Bakalarski C.E."/>
            <person name="Elledge S.J."/>
            <person name="Gygi S.P."/>
        </authorList>
    </citation>
    <scope>PHOSPHORYLATION [LARGE SCALE ANALYSIS] AT THR-143; SER-298; SER-308; SER-311; SER-426; THR-458 AND SER-568</scope>
    <scope>IDENTIFICATION BY MASS SPECTROMETRY [LARGE SCALE ANALYSIS]</scope>
    <source>
        <tissue>Cervix carcinoma</tissue>
    </source>
</reference>
<reference key="15">
    <citation type="journal article" date="2009" name="Anal. Chem.">
        <title>Lys-N and trypsin cover complementary parts of the phosphoproteome in a refined SCX-based approach.</title>
        <authorList>
            <person name="Gauci S."/>
            <person name="Helbig A.O."/>
            <person name="Slijper M."/>
            <person name="Krijgsveld J."/>
            <person name="Heck A.J."/>
            <person name="Mohammed S."/>
        </authorList>
    </citation>
    <scope>IDENTIFICATION BY MASS SPECTROMETRY [LARGE SCALE ANALYSIS]</scope>
</reference>
<reference key="16">
    <citation type="journal article" date="2009" name="Cancer Cell">
        <title>MTDH activation by 8q22 genomic gain promotes chemoresistance and metastasis of poor-prognosis breast cancer.</title>
        <authorList>
            <person name="Hu G."/>
            <person name="Chong R.A."/>
            <person name="Yang Q."/>
            <person name="Wei Y."/>
            <person name="Blanco M.A."/>
            <person name="Li F."/>
            <person name="Reiss M."/>
            <person name="Au J.L.-S."/>
            <person name="Haffty B.G."/>
            <person name="Kang Y."/>
        </authorList>
    </citation>
    <scope>FUNCTION</scope>
</reference>
<reference key="17">
    <citation type="journal article" date="2009" name="Sci. Signal.">
        <title>Quantitative phosphoproteomic analysis of T cell receptor signaling reveals system-wide modulation of protein-protein interactions.</title>
        <authorList>
            <person name="Mayya V."/>
            <person name="Lundgren D.H."/>
            <person name="Hwang S.-I."/>
            <person name="Rezaul K."/>
            <person name="Wu L."/>
            <person name="Eng J.K."/>
            <person name="Rodionov V."/>
            <person name="Han D.K."/>
        </authorList>
    </citation>
    <scope>PHOSPHORYLATION [LARGE SCALE ANALYSIS] AT SER-344 AND SER-369</scope>
    <scope>IDENTIFICATION BY MASS SPECTROMETRY [LARGE SCALE ANALYSIS]</scope>
    <source>
        <tissue>Leukemic T-cell</tissue>
    </source>
</reference>
<reference key="18">
    <citation type="journal article" date="2010" name="Sci. Signal.">
        <title>Quantitative phosphoproteomics reveals widespread full phosphorylation site occupancy during mitosis.</title>
        <authorList>
            <person name="Olsen J.V."/>
            <person name="Vermeulen M."/>
            <person name="Santamaria A."/>
            <person name="Kumar C."/>
            <person name="Miller M.L."/>
            <person name="Jensen L.J."/>
            <person name="Gnad F."/>
            <person name="Cox J."/>
            <person name="Jensen T.S."/>
            <person name="Nigg E.A."/>
            <person name="Brunak S."/>
            <person name="Mann M."/>
        </authorList>
    </citation>
    <scope>PHOSPHORYLATION [LARGE SCALE ANALYSIS] AT THR-143; SER-298; SER-306; SER-308 AND SER-426</scope>
    <scope>IDENTIFICATION BY MASS SPECTROMETRY [LARGE SCALE ANALYSIS]</scope>
    <source>
        <tissue>Cervix carcinoma</tissue>
    </source>
</reference>
<reference key="19">
    <citation type="journal article" date="2011" name="BMC Syst. Biol.">
        <title>Initial characterization of the human central proteome.</title>
        <authorList>
            <person name="Burkard T.R."/>
            <person name="Planyavsky M."/>
            <person name="Kaupe I."/>
            <person name="Breitwieser F.P."/>
            <person name="Buerckstuemmer T."/>
            <person name="Bennett K.L."/>
            <person name="Superti-Furga G."/>
            <person name="Colinge J."/>
        </authorList>
    </citation>
    <scope>IDENTIFICATION BY MASS SPECTROMETRY [LARGE SCALE ANALYSIS]</scope>
</reference>
<reference key="20">
    <citation type="journal article" date="2011" name="Sci. Signal.">
        <title>System-wide temporal characterization of the proteome and phosphoproteome of human embryonic stem cell differentiation.</title>
        <authorList>
            <person name="Rigbolt K.T."/>
            <person name="Prokhorova T.A."/>
            <person name="Akimov V."/>
            <person name="Henningsen J."/>
            <person name="Johansen P.T."/>
            <person name="Kratchmarova I."/>
            <person name="Kassem M."/>
            <person name="Mann M."/>
            <person name="Olsen J.V."/>
            <person name="Blagoev B."/>
        </authorList>
    </citation>
    <scope>PHOSPHORYLATION [LARGE SCALE ANALYSIS] AT SER-298 AND SER-426</scope>
    <scope>IDENTIFICATION BY MASS SPECTROMETRY [LARGE SCALE ANALYSIS]</scope>
</reference>
<reference key="21">
    <citation type="journal article" date="2013" name="J. Proteome Res.">
        <title>Toward a comprehensive characterization of a human cancer cell phosphoproteome.</title>
        <authorList>
            <person name="Zhou H."/>
            <person name="Di Palma S."/>
            <person name="Preisinger C."/>
            <person name="Peng M."/>
            <person name="Polat A.N."/>
            <person name="Heck A.J."/>
            <person name="Mohammed S."/>
        </authorList>
    </citation>
    <scope>PHOSPHORYLATION [LARGE SCALE ANALYSIS] AT THR-143; SER-180; SER-298; SER-308; SER-311; SER-323; SER-339; SER-426; SER-478; SER-494; SER-496 AND SER-568</scope>
    <scope>IDENTIFICATION BY MASS SPECTROMETRY [LARGE SCALE ANALYSIS]</scope>
    <source>
        <tissue>Cervix carcinoma</tissue>
        <tissue>Erythroleukemia</tissue>
    </source>
</reference>
<reference key="22">
    <citation type="journal article" date="2014" name="J. Proteomics">
        <title>An enzyme assisted RP-RPLC approach for in-depth analysis of human liver phosphoproteome.</title>
        <authorList>
            <person name="Bian Y."/>
            <person name="Song C."/>
            <person name="Cheng K."/>
            <person name="Dong M."/>
            <person name="Wang F."/>
            <person name="Huang J."/>
            <person name="Sun D."/>
            <person name="Wang L."/>
            <person name="Ye M."/>
            <person name="Zou H."/>
        </authorList>
    </citation>
    <scope>PHOSPHORYLATION [LARGE SCALE ANALYSIS] AT SER-216; SER-251; SER-298; SER-308 AND SER-426</scope>
    <scope>IDENTIFICATION BY MASS SPECTROMETRY [LARGE SCALE ANALYSIS]</scope>
    <source>
        <tissue>Liver</tissue>
    </source>
</reference>
<reference key="23">
    <citation type="journal article" date="2015" name="Proteomics">
        <title>N-terminome analysis of the human mitochondrial proteome.</title>
        <authorList>
            <person name="Vaca Jacome A.S."/>
            <person name="Rabilloud T."/>
            <person name="Schaeffer-Reiss C."/>
            <person name="Rompais M."/>
            <person name="Ayoub D."/>
            <person name="Lane L."/>
            <person name="Bairoch A."/>
            <person name="Van Dorsselaer A."/>
            <person name="Carapito C."/>
        </authorList>
    </citation>
    <scope>IDENTIFICATION BY MASS SPECTROMETRY [LARGE SCALE ANALYSIS]</scope>
</reference>
<sequence length="582" mass="63837">MAARSWQDELAQQAEEGSARLREMLSVGLGFLRTELGLDLGLEPKRYPGWVILVGTGALGLLLLFLLGYGWAAACAGARKKRRSPPRKREEAAAVPAAAPDDLALLKNLRSEEQKKKNRKKLSEKPKPNGRTVEVAEGEAVRTPQSVTAKQPPEIDKKNEKSKKNKKKSKSDAKAVQNSSRHDGKEVDEGAWETKISHREKRQQRKRDKVLTDSGSLDSTIPGIENTITVTTEQLTTASFPVGSKKNKGDSHLNVQVSNFKSGKGDSTLQVSSGLNENLTVNGGGWNEKSVKLSSQISAGEEKWNSVSPASAGKRKTEPSAWSQDTGDANTNGKDWGRSWSDRSIFSGIGSTAEPVSQSTTSDYQWDVSRNQPYIDDEWSGLNGLSSADPNSDWNAPAEEWGNWVDEERASLLKSQEPIPDDQKVSDDDKEKGEGALPTGKSKKKKKKKKKQGEDNSTAQDTEELEKEIREDLPVNTSKTRPKQEKAFSLKTISTSDPAEVLVKNSQPIKTLPPATSTEPSVILSKSDSDKSSSQVPPILQETDKSKSNTKQNSVPPSQTKSETSWESPKQIKKKKKARRET</sequence>
<accession>Q86UE4</accession>
<accession>Q05DH2</accession>
<accession>Q52QU9</accession>
<accession>Q6PK07</accession>
<accession>Q8TCX3</accession>
<proteinExistence type="evidence at protein level"/>
<evidence type="ECO:0000250" key="1"/>
<evidence type="ECO:0000250" key="2">
    <source>
        <dbReference type="UniProtKB" id="Q80WJ7"/>
    </source>
</evidence>
<evidence type="ECO:0000250" key="3">
    <source>
        <dbReference type="UniProtKB" id="Q9Z1W6"/>
    </source>
</evidence>
<evidence type="ECO:0000255" key="4"/>
<evidence type="ECO:0000256" key="5">
    <source>
        <dbReference type="SAM" id="MobiDB-lite"/>
    </source>
</evidence>
<evidence type="ECO:0000269" key="6">
    <source>
    </source>
</evidence>
<evidence type="ECO:0000269" key="7">
    <source>
    </source>
</evidence>
<evidence type="ECO:0000269" key="8">
    <source>
    </source>
</evidence>
<evidence type="ECO:0000269" key="9">
    <source>
    </source>
</evidence>
<evidence type="ECO:0000269" key="10">
    <source>
    </source>
</evidence>
<evidence type="ECO:0000269" key="11">
    <source>
    </source>
</evidence>
<evidence type="ECO:0000305" key="12"/>
<evidence type="ECO:0000305" key="13">
    <source>
    </source>
</evidence>
<evidence type="ECO:0007744" key="14">
    <source>
    </source>
</evidence>
<evidence type="ECO:0007744" key="15">
    <source>
    </source>
</evidence>
<evidence type="ECO:0007744" key="16">
    <source>
    </source>
</evidence>
<evidence type="ECO:0007744" key="17">
    <source>
    </source>
</evidence>
<evidence type="ECO:0007744" key="18">
    <source>
    </source>
</evidence>
<evidence type="ECO:0007744" key="19">
    <source>
    </source>
</evidence>
<evidence type="ECO:0007744" key="20">
    <source>
    </source>
</evidence>
<evidence type="ECO:0007744" key="21">
    <source>
    </source>
</evidence>
<comment type="function">
    <text evidence="7 8 9 11">Down-regulates SLC1A2/EAAT2 promoter activity when expressed ectopically. Activates the nuclear factor kappa-B (NF-kappa-B) transcription factor. Promotes anchorage-independent growth of immortalized melanocytes and astrocytes which is a key component in tumor cell expansion. Promotes lung metastasis and also has an effect on bone and brain metastasis, possibly by enhancing the seeding of tumor cells to the target organ endothelium. Induces chemoresistance.</text>
</comment>
<comment type="subunit">
    <text evidence="8 9 10">Interacts with BCCIP, CREBBP/CBP and RELA/p65.</text>
</comment>
<comment type="interaction">
    <interactant intactId="EBI-1046588">
        <id>Q86UE4</id>
    </interactant>
    <interactant intactId="EBI-528269">
        <id>Q9UKV8</id>
        <label>AGO2</label>
    </interactant>
    <organismsDiffer>false</organismsDiffer>
    <experiments>3</experiments>
</comment>
<comment type="interaction">
    <interactant intactId="EBI-1046588">
        <id>Q86UE4</id>
    </interactant>
    <interactant intactId="EBI-81215">
        <id>Q92793</id>
        <label>CREBBP</label>
    </interactant>
    <organismsDiffer>false</organismsDiffer>
    <experiments>2</experiments>
</comment>
<comment type="interaction">
    <interactant intactId="EBI-1046588">
        <id>Q86UE4</id>
    </interactant>
    <interactant intactId="EBI-1044112">
        <id>Q7KZF4</id>
        <label>SND1</label>
    </interactant>
    <organismsDiffer>false</organismsDiffer>
    <experiments>9</experiments>
</comment>
<comment type="subcellular location">
    <subcellularLocation>
        <location>Endoplasmic reticulum membrane</location>
        <topology>Single-pass membrane protein</topology>
    </subcellularLocation>
    <subcellularLocation>
        <location evidence="1">Nucleus membrane</location>
        <topology evidence="1">Single-pass membrane protein</topology>
    </subcellularLocation>
    <subcellularLocation>
        <location evidence="1">Cell junction</location>
        <location evidence="1">Tight junction</location>
    </subcellularLocation>
    <subcellularLocation>
        <location evidence="1">Nucleus</location>
        <location evidence="1">Nucleolus</location>
    </subcellularLocation>
    <subcellularLocation>
        <location>Cytoplasm</location>
        <location>Perinuclear region</location>
    </subcellularLocation>
    <text evidence="1">In epithelial cells, recruited to tight junctions (TJ) during the maturation of the TJ complexes. A nucleolar staining may be due to nuclear targeting of an isoform lacking the transmembrane domain (By similarity). TNF-alpha causes translocation from the cytoplasm to the nucleus.</text>
</comment>
<comment type="tissue specificity">
    <text evidence="7">Widely expressed with highest levels in muscle-dominating organs such as skeletal muscle, heart, tongue and small intestine and in endocrine glands such as thyroid and adrenal gland. Overexpressed in various cancers including breast, brain, prostate, melanoma and glioblastoma multiforme.</text>
</comment>
<comment type="induction">
    <text evidence="7 8">By TNF (at protein level). By HIV-1 infection of primary fetal astrocytes.</text>
</comment>
<comment type="miscellaneous">
    <text>Knockdown significantly reduces the adhesion of cancer cells to lung microvascular endothelial cells and the reciprocal effect is observed following overexpression.</text>
</comment>
<comment type="caution">
    <text evidence="13">Was originally thought to be a type II membrane protein but this is inconsistent with the results of multiple phosphorylation studies because this topology would locate the phosphorylation sites in the lumen or extracellularly rather than in the cytoplasm.</text>
</comment>
<keyword id="KW-0002">3D-structure</keyword>
<keyword id="KW-0007">Acetylation</keyword>
<keyword id="KW-0965">Cell junction</keyword>
<keyword id="KW-0963">Cytoplasm</keyword>
<keyword id="KW-0256">Endoplasmic reticulum</keyword>
<keyword id="KW-0472">Membrane</keyword>
<keyword id="KW-0539">Nucleus</keyword>
<keyword id="KW-0597">Phosphoprotein</keyword>
<keyword id="KW-1267">Proteomics identification</keyword>
<keyword id="KW-1185">Reference proteome</keyword>
<keyword id="KW-0796">Tight junction</keyword>
<keyword id="KW-0812">Transmembrane</keyword>
<keyword id="KW-1133">Transmembrane helix</keyword>
<name>LYRIC_HUMAN</name>
<dbReference type="EMBL" id="AF501310">
    <property type="protein sequence ID" value="AAP30791.1"/>
    <property type="molecule type" value="mRNA"/>
</dbReference>
<dbReference type="EMBL" id="AY082966">
    <property type="protein sequence ID" value="AAL92861.1"/>
    <property type="molecule type" value="mRNA"/>
</dbReference>
<dbReference type="EMBL" id="AF411226">
    <property type="protein sequence ID" value="AAO65771.1"/>
    <property type="molecule type" value="mRNA"/>
</dbReference>
<dbReference type="EMBL" id="AY974040">
    <property type="protein sequence ID" value="AAX84832.1"/>
    <property type="molecule type" value="mRNA"/>
</dbReference>
<dbReference type="EMBL" id="BC009324">
    <property type="protein sequence ID" value="AAH09324.1"/>
    <property type="molecule type" value="mRNA"/>
</dbReference>
<dbReference type="EMBL" id="BC014977">
    <property type="protein sequence ID" value="AAH14977.1"/>
    <property type="molecule type" value="mRNA"/>
</dbReference>
<dbReference type="EMBL" id="BC045642">
    <property type="protein sequence ID" value="AAH45642.1"/>
    <property type="molecule type" value="mRNA"/>
</dbReference>
<dbReference type="EMBL" id="AK000745">
    <property type="status" value="NOT_ANNOTATED_CDS"/>
    <property type="molecule type" value="mRNA"/>
</dbReference>
<dbReference type="CCDS" id="CCDS6274.1"/>
<dbReference type="RefSeq" id="NP_848927.2">
    <property type="nucleotide sequence ID" value="NM_178812.4"/>
</dbReference>
<dbReference type="PDB" id="4QMG">
    <property type="method" value="X-ray"/>
    <property type="resolution" value="2.70 A"/>
    <property type="chains" value="F/G/H/I/J=386-407"/>
</dbReference>
<dbReference type="PDBsum" id="4QMG"/>
<dbReference type="SMR" id="Q86UE4"/>
<dbReference type="BioGRID" id="124913">
    <property type="interactions" value="528"/>
</dbReference>
<dbReference type="FunCoup" id="Q86UE4">
    <property type="interactions" value="2821"/>
</dbReference>
<dbReference type="IntAct" id="Q86UE4">
    <property type="interactions" value="166"/>
</dbReference>
<dbReference type="MINT" id="Q86UE4"/>
<dbReference type="STRING" id="9606.ENSP00000338235"/>
<dbReference type="GlyCosmos" id="Q86UE4">
    <property type="glycosylation" value="2 sites, 1 glycan"/>
</dbReference>
<dbReference type="GlyGen" id="Q86UE4">
    <property type="glycosylation" value="6 sites, 1 O-linked glycan (6 sites)"/>
</dbReference>
<dbReference type="iPTMnet" id="Q86UE4"/>
<dbReference type="PhosphoSitePlus" id="Q86UE4"/>
<dbReference type="SwissPalm" id="Q86UE4"/>
<dbReference type="BioMuta" id="MTDH"/>
<dbReference type="DMDM" id="56749088"/>
<dbReference type="jPOST" id="Q86UE4"/>
<dbReference type="MassIVE" id="Q86UE4"/>
<dbReference type="PaxDb" id="9606-ENSP00000338235"/>
<dbReference type="PeptideAtlas" id="Q86UE4"/>
<dbReference type="ProteomicsDB" id="69809"/>
<dbReference type="Pumba" id="Q86UE4"/>
<dbReference type="TopDownProteomics" id="Q86UE4"/>
<dbReference type="Antibodypedia" id="2507">
    <property type="antibodies" value="432 antibodies from 39 providers"/>
</dbReference>
<dbReference type="DNASU" id="92140"/>
<dbReference type="Ensembl" id="ENST00000336273.8">
    <property type="protein sequence ID" value="ENSP00000338235.3"/>
    <property type="gene ID" value="ENSG00000147649.10"/>
</dbReference>
<dbReference type="GeneID" id="92140"/>
<dbReference type="KEGG" id="hsa:92140"/>
<dbReference type="MANE-Select" id="ENST00000336273.8">
    <property type="protein sequence ID" value="ENSP00000338235.3"/>
    <property type="RefSeq nucleotide sequence ID" value="NM_178812.4"/>
    <property type="RefSeq protein sequence ID" value="NP_848927.2"/>
</dbReference>
<dbReference type="UCSC" id="uc003yhz.4">
    <property type="organism name" value="human"/>
</dbReference>
<dbReference type="AGR" id="HGNC:29608"/>
<dbReference type="CTD" id="92140"/>
<dbReference type="DisGeNET" id="92140"/>
<dbReference type="GeneCards" id="MTDH"/>
<dbReference type="HGNC" id="HGNC:29608">
    <property type="gene designation" value="MTDH"/>
</dbReference>
<dbReference type="HPA" id="ENSG00000147649">
    <property type="expression patterns" value="Low tissue specificity"/>
</dbReference>
<dbReference type="MIM" id="610323">
    <property type="type" value="gene"/>
</dbReference>
<dbReference type="neXtProt" id="NX_Q86UE4"/>
<dbReference type="OpenTargets" id="ENSG00000147649"/>
<dbReference type="PharmGKB" id="PA142671307"/>
<dbReference type="VEuPathDB" id="HostDB:ENSG00000147649"/>
<dbReference type="eggNOG" id="ENOG502QU7P">
    <property type="taxonomic scope" value="Eukaryota"/>
</dbReference>
<dbReference type="GeneTree" id="ENSGT00940000154181"/>
<dbReference type="HOGENOM" id="CLU_034908_0_0_1"/>
<dbReference type="InParanoid" id="Q86UE4"/>
<dbReference type="OMA" id="NPVSFSM"/>
<dbReference type="OrthoDB" id="8918651at2759"/>
<dbReference type="PAN-GO" id="Q86UE4">
    <property type="GO annotations" value="4 GO annotations based on evolutionary models"/>
</dbReference>
<dbReference type="PhylomeDB" id="Q86UE4"/>
<dbReference type="TreeFam" id="TF331350"/>
<dbReference type="PathwayCommons" id="Q86UE4"/>
<dbReference type="SignaLink" id="Q86UE4"/>
<dbReference type="BioGRID-ORCS" id="92140">
    <property type="hits" value="8 hits in 1156 CRISPR screens"/>
</dbReference>
<dbReference type="CD-CODE" id="FB4E32DD">
    <property type="entry name" value="Presynaptic clusters and postsynaptic densities"/>
</dbReference>
<dbReference type="ChiTaRS" id="MTDH">
    <property type="organism name" value="human"/>
</dbReference>
<dbReference type="EvolutionaryTrace" id="Q86UE4"/>
<dbReference type="GeneWiki" id="MTDH"/>
<dbReference type="GenomeRNAi" id="92140"/>
<dbReference type="Pharos" id="Q86UE4">
    <property type="development level" value="Tbio"/>
</dbReference>
<dbReference type="PRO" id="PR:Q86UE4"/>
<dbReference type="Proteomes" id="UP000005640">
    <property type="component" value="Chromosome 8"/>
</dbReference>
<dbReference type="RNAct" id="Q86UE4">
    <property type="molecule type" value="protein"/>
</dbReference>
<dbReference type="Bgee" id="ENSG00000147649">
    <property type="expression patterns" value="Expressed in calcaneal tendon and 209 other cell types or tissues"/>
</dbReference>
<dbReference type="ExpressionAtlas" id="Q86UE4">
    <property type="expression patterns" value="baseline and differential"/>
</dbReference>
<dbReference type="GO" id="GO:0016324">
    <property type="term" value="C:apical plasma membrane"/>
    <property type="evidence" value="ECO:0000250"/>
    <property type="project" value="UniProtKB"/>
</dbReference>
<dbReference type="GO" id="GO:0005923">
    <property type="term" value="C:bicellular tight junction"/>
    <property type="evidence" value="ECO:0000250"/>
    <property type="project" value="UniProtKB"/>
</dbReference>
<dbReference type="GO" id="GO:0005737">
    <property type="term" value="C:cytoplasm"/>
    <property type="evidence" value="ECO:0000314"/>
    <property type="project" value="UniProtKB"/>
</dbReference>
<dbReference type="GO" id="GO:0005783">
    <property type="term" value="C:endoplasmic reticulum"/>
    <property type="evidence" value="ECO:0000314"/>
    <property type="project" value="UniProtKB"/>
</dbReference>
<dbReference type="GO" id="GO:0005789">
    <property type="term" value="C:endoplasmic reticulum membrane"/>
    <property type="evidence" value="ECO:0000250"/>
    <property type="project" value="UniProtKB"/>
</dbReference>
<dbReference type="GO" id="GO:0001650">
    <property type="term" value="C:fibrillar center"/>
    <property type="evidence" value="ECO:0000314"/>
    <property type="project" value="HPA"/>
</dbReference>
<dbReference type="GO" id="GO:0046581">
    <property type="term" value="C:intercellular canaliculus"/>
    <property type="evidence" value="ECO:0000250"/>
    <property type="project" value="UniProtKB"/>
</dbReference>
<dbReference type="GO" id="GO:0016604">
    <property type="term" value="C:nuclear body"/>
    <property type="evidence" value="ECO:0000314"/>
    <property type="project" value="UniProtKB"/>
</dbReference>
<dbReference type="GO" id="GO:0031965">
    <property type="term" value="C:nuclear membrane"/>
    <property type="evidence" value="ECO:0007669"/>
    <property type="project" value="UniProtKB-SubCell"/>
</dbReference>
<dbReference type="GO" id="GO:0005634">
    <property type="term" value="C:nucleus"/>
    <property type="evidence" value="ECO:0000314"/>
    <property type="project" value="UniProtKB"/>
</dbReference>
<dbReference type="GO" id="GO:0048471">
    <property type="term" value="C:perinuclear region of cytoplasm"/>
    <property type="evidence" value="ECO:0000314"/>
    <property type="project" value="UniProtKB"/>
</dbReference>
<dbReference type="GO" id="GO:0003725">
    <property type="term" value="F:double-stranded RNA binding"/>
    <property type="evidence" value="ECO:0000314"/>
    <property type="project" value="MGI"/>
</dbReference>
<dbReference type="GO" id="GO:0051059">
    <property type="term" value="F:NF-kappaB binding"/>
    <property type="evidence" value="ECO:0000353"/>
    <property type="project" value="UniProtKB"/>
</dbReference>
<dbReference type="GO" id="GO:0003723">
    <property type="term" value="F:RNA binding"/>
    <property type="evidence" value="ECO:0007005"/>
    <property type="project" value="UniProtKB"/>
</dbReference>
<dbReference type="GO" id="GO:0061629">
    <property type="term" value="F:RNA polymerase II-specific DNA-binding transcription factor binding"/>
    <property type="evidence" value="ECO:0000353"/>
    <property type="project" value="UniProtKB"/>
</dbReference>
<dbReference type="GO" id="GO:0003713">
    <property type="term" value="F:transcription coactivator activity"/>
    <property type="evidence" value="ECO:0000315"/>
    <property type="project" value="UniProtKB"/>
</dbReference>
<dbReference type="GO" id="GO:0003712">
    <property type="term" value="F:transcription coregulator activity"/>
    <property type="evidence" value="ECO:0000318"/>
    <property type="project" value="GO_Central"/>
</dbReference>
<dbReference type="GO" id="GO:0031663">
    <property type="term" value="P:lipopolysaccharide-mediated signaling pathway"/>
    <property type="evidence" value="ECO:0000315"/>
    <property type="project" value="UniProtKB"/>
</dbReference>
<dbReference type="GO" id="GO:0043066">
    <property type="term" value="P:negative regulation of apoptotic process"/>
    <property type="evidence" value="ECO:0000314"/>
    <property type="project" value="UniProtKB"/>
</dbReference>
<dbReference type="GO" id="GO:0000122">
    <property type="term" value="P:negative regulation of transcription by RNA polymerase II"/>
    <property type="evidence" value="ECO:0000314"/>
    <property type="project" value="UniProtKB"/>
</dbReference>
<dbReference type="GO" id="GO:0045766">
    <property type="term" value="P:positive regulation of angiogenesis"/>
    <property type="evidence" value="ECO:0000314"/>
    <property type="project" value="UniProtKB"/>
</dbReference>
<dbReference type="GO" id="GO:0010508">
    <property type="term" value="P:positive regulation of autophagy"/>
    <property type="evidence" value="ECO:0000314"/>
    <property type="project" value="UniProtKB"/>
</dbReference>
<dbReference type="GO" id="GO:0043123">
    <property type="term" value="P:positive regulation of canonical NF-kappaB signal transduction"/>
    <property type="evidence" value="ECO:0000314"/>
    <property type="project" value="UniProtKB"/>
</dbReference>
<dbReference type="GO" id="GO:0051092">
    <property type="term" value="P:positive regulation of NF-kappaB transcription factor activity"/>
    <property type="evidence" value="ECO:0000314"/>
    <property type="project" value="UniProtKB"/>
</dbReference>
<dbReference type="GO" id="GO:0051897">
    <property type="term" value="P:positive regulation of phosphatidylinositol 3-kinase/protein kinase B signal transduction"/>
    <property type="evidence" value="ECO:0000314"/>
    <property type="project" value="UniProtKB"/>
</dbReference>
<dbReference type="GO" id="GO:0006357">
    <property type="term" value="P:regulation of transcription by RNA polymerase II"/>
    <property type="evidence" value="ECO:0000318"/>
    <property type="project" value="GO_Central"/>
</dbReference>
<dbReference type="InterPro" id="IPR031402">
    <property type="entry name" value="LYRIC"/>
</dbReference>
<dbReference type="InterPro" id="IPR052305">
    <property type="entry name" value="TransReg_TumorExp"/>
</dbReference>
<dbReference type="PANTHER" id="PTHR23251">
    <property type="entry name" value="LYSINE-RICH CEACAM1 CO-ISOLATED PROTEIN LYRIC PROTEIN"/>
    <property type="match status" value="1"/>
</dbReference>
<dbReference type="PANTHER" id="PTHR23251:SF0">
    <property type="entry name" value="PROTEIN LYRIC"/>
    <property type="match status" value="1"/>
</dbReference>
<dbReference type="Pfam" id="PF15686">
    <property type="entry name" value="LYRIC"/>
    <property type="match status" value="1"/>
</dbReference>
<protein>
    <recommendedName>
        <fullName>Protein LYRIC</fullName>
    </recommendedName>
    <alternativeName>
        <fullName>3D3/LYRIC</fullName>
    </alternativeName>
    <alternativeName>
        <fullName>Astrocyte elevated gene-1 protein</fullName>
        <shortName>AEG-1</shortName>
    </alternativeName>
    <alternativeName>
        <fullName>Lysine-rich CEACAM1 co-isolated protein</fullName>
    </alternativeName>
    <alternativeName>
        <fullName>Metadherin</fullName>
    </alternativeName>
    <alternativeName>
        <fullName>Metastasis adhesion protein</fullName>
    </alternativeName>
</protein>
<gene>
    <name type="primary">MTDH</name>
    <name type="synonym">AEG1</name>
    <name type="synonym">LYRIC</name>
</gene>
<feature type="chain" id="PRO_0000084533" description="Protein LYRIC">
    <location>
        <begin position="1"/>
        <end position="582"/>
    </location>
</feature>
<feature type="topological domain" description="Lumenal" evidence="4">
    <location>
        <begin position="1"/>
        <end position="48"/>
    </location>
</feature>
<feature type="transmembrane region" description="Helical" evidence="4">
    <location>
        <begin position="49"/>
        <end position="69"/>
    </location>
</feature>
<feature type="topological domain" description="Cytoplasmic" evidence="4">
    <location>
        <begin position="70"/>
        <end position="582"/>
    </location>
</feature>
<feature type="region of interest" description="Activation of NF-kappa-B">
    <location>
        <begin position="1"/>
        <end position="71"/>
    </location>
</feature>
<feature type="region of interest" description="Interaction with BCCIP" evidence="10">
    <location>
        <begin position="72"/>
        <end position="169"/>
    </location>
</feature>
<feature type="region of interest" description="Disordered" evidence="5">
    <location>
        <begin position="78"/>
        <end position="222"/>
    </location>
</feature>
<feature type="region of interest" description="Interaction with RELA" evidence="8">
    <location>
        <begin position="101"/>
        <end position="205"/>
    </location>
</feature>
<feature type="region of interest" description="Disordered" evidence="5">
    <location>
        <begin position="280"/>
        <end position="582"/>
    </location>
</feature>
<feature type="region of interest" description="Lung-homing for mammary tumors" evidence="1">
    <location>
        <begin position="381"/>
        <end position="443"/>
    </location>
</feature>
<feature type="compositionally biased region" description="Low complexity" evidence="5">
    <location>
        <begin position="93"/>
        <end position="106"/>
    </location>
</feature>
<feature type="compositionally biased region" description="Basic and acidic residues" evidence="5">
    <location>
        <begin position="109"/>
        <end position="127"/>
    </location>
</feature>
<feature type="compositionally biased region" description="Basic residues" evidence="5">
    <location>
        <begin position="160"/>
        <end position="169"/>
    </location>
</feature>
<feature type="compositionally biased region" description="Basic residues" evidence="5">
    <location>
        <begin position="198"/>
        <end position="208"/>
    </location>
</feature>
<feature type="compositionally biased region" description="Polar residues" evidence="5">
    <location>
        <begin position="320"/>
        <end position="333"/>
    </location>
</feature>
<feature type="compositionally biased region" description="Polar residues" evidence="5">
    <location>
        <begin position="354"/>
        <end position="372"/>
    </location>
</feature>
<feature type="compositionally biased region" description="Polar residues" evidence="5">
    <location>
        <begin position="383"/>
        <end position="394"/>
    </location>
</feature>
<feature type="compositionally biased region" description="Basic and acidic residues" evidence="5">
    <location>
        <begin position="421"/>
        <end position="434"/>
    </location>
</feature>
<feature type="compositionally biased region" description="Basic residues" evidence="5">
    <location>
        <begin position="441"/>
        <end position="451"/>
    </location>
</feature>
<feature type="compositionally biased region" description="Polar residues" evidence="5">
    <location>
        <begin position="504"/>
        <end position="520"/>
    </location>
</feature>
<feature type="compositionally biased region" description="Polar residues" evidence="5">
    <location>
        <begin position="549"/>
        <end position="568"/>
    </location>
</feature>
<feature type="compositionally biased region" description="Basic residues" evidence="5">
    <location>
        <begin position="571"/>
        <end position="582"/>
    </location>
</feature>
<feature type="modified residue" description="Phosphothreonine" evidence="16 18 20">
    <location>
        <position position="143"/>
    </location>
</feature>
<feature type="modified residue" description="Phosphoserine" evidence="20">
    <location>
        <position position="180"/>
    </location>
</feature>
<feature type="modified residue" description="Phosphoserine" evidence="21">
    <location>
        <position position="216"/>
    </location>
</feature>
<feature type="modified residue" description="Phosphoserine" evidence="21">
    <location>
        <position position="251"/>
    </location>
</feature>
<feature type="modified residue" description="N6-acetyllysine" evidence="2">
    <location>
        <position position="264"/>
    </location>
</feature>
<feature type="modified residue" description="Phosphoserine" evidence="14 15 16 18 19 20 21">
    <location>
        <position position="298"/>
    </location>
</feature>
<feature type="modified residue" description="Phosphoserine" evidence="18">
    <location>
        <position position="306"/>
    </location>
</feature>
<feature type="modified residue" description="Phosphoserine" evidence="16 18 20 21">
    <location>
        <position position="308"/>
    </location>
</feature>
<feature type="modified residue" description="Phosphoserine" evidence="16 20">
    <location>
        <position position="311"/>
    </location>
</feature>
<feature type="modified residue" description="Phosphoserine" evidence="20">
    <location>
        <position position="323"/>
    </location>
</feature>
<feature type="modified residue" description="Phosphoserine" evidence="20">
    <location>
        <position position="339"/>
    </location>
</feature>
<feature type="modified residue" description="Phosphoserine" evidence="17">
    <location>
        <position position="344"/>
    </location>
</feature>
<feature type="modified residue" description="Phosphoserine" evidence="17">
    <location>
        <position position="369"/>
    </location>
</feature>
<feature type="modified residue" description="Phosphoserine" evidence="14">
    <location>
        <position position="415"/>
    </location>
</feature>
<feature type="modified residue" description="Phosphoserine" evidence="14 15 16 18 19 20 21">
    <location>
        <position position="426"/>
    </location>
</feature>
<feature type="modified residue" description="Phosphoserine" evidence="3">
    <location>
        <position position="457"/>
    </location>
</feature>
<feature type="modified residue" description="Phosphothreonine" evidence="16">
    <location>
        <position position="458"/>
    </location>
</feature>
<feature type="modified residue" description="Phosphoserine" evidence="20">
    <location>
        <position position="478"/>
    </location>
</feature>
<feature type="modified residue" description="Phosphoserine" evidence="20">
    <location>
        <position position="494"/>
    </location>
</feature>
<feature type="modified residue" description="Phosphoserine" evidence="20">
    <location>
        <position position="496"/>
    </location>
</feature>
<feature type="modified residue" description="Phosphoserine" evidence="16 20">
    <location>
        <position position="568"/>
    </location>
</feature>
<feature type="sequence variant" id="VAR_054661" description="In dbSNP:rs17854374." evidence="6">
    <original>T</original>
    <variation>A</variation>
    <location>
        <position position="317"/>
    </location>
</feature>
<feature type="sequence conflict" description="In Ref. 5; AAH09324/AAH45642." evidence="12" ref="5">
    <original>A</original>
    <variation>S</variation>
    <location>
        <position position="78"/>
    </location>
</feature>
<feature type="sequence conflict" description="In Ref. 4; AAX84832." evidence="12" ref="4">
    <original>Q</original>
    <variation>H</variation>
    <location>
        <position position="145"/>
    </location>
</feature>
<feature type="sequence conflict" description="In Ref. 4; AAX84832." evidence="12" ref="4">
    <original>T</original>
    <variation>A</variation>
    <location>
        <position position="543"/>
    </location>
</feature>
<feature type="sequence conflict" description="In Ref. 4; AAX84832." evidence="12" ref="4">
    <original>E</original>
    <variation>D</variation>
    <location>
        <position position="581"/>
    </location>
</feature>
<organism>
    <name type="scientific">Homo sapiens</name>
    <name type="common">Human</name>
    <dbReference type="NCBI Taxonomy" id="9606"/>
    <lineage>
        <taxon>Eukaryota</taxon>
        <taxon>Metazoa</taxon>
        <taxon>Chordata</taxon>
        <taxon>Craniata</taxon>
        <taxon>Vertebrata</taxon>
        <taxon>Euteleostomi</taxon>
        <taxon>Mammalia</taxon>
        <taxon>Eutheria</taxon>
        <taxon>Euarchontoglires</taxon>
        <taxon>Primates</taxon>
        <taxon>Haplorrhini</taxon>
        <taxon>Catarrhini</taxon>
        <taxon>Hominidae</taxon>
        <taxon>Homo</taxon>
    </lineage>
</organism>